<organism>
    <name type="scientific">Mus musculus</name>
    <name type="common">Mouse</name>
    <dbReference type="NCBI Taxonomy" id="10090"/>
    <lineage>
        <taxon>Eukaryota</taxon>
        <taxon>Metazoa</taxon>
        <taxon>Chordata</taxon>
        <taxon>Craniata</taxon>
        <taxon>Vertebrata</taxon>
        <taxon>Euteleostomi</taxon>
        <taxon>Mammalia</taxon>
        <taxon>Eutheria</taxon>
        <taxon>Euarchontoglires</taxon>
        <taxon>Glires</taxon>
        <taxon>Rodentia</taxon>
        <taxon>Myomorpha</taxon>
        <taxon>Muroidea</taxon>
        <taxon>Muridae</taxon>
        <taxon>Murinae</taxon>
        <taxon>Mus</taxon>
        <taxon>Mus</taxon>
    </lineage>
</organism>
<feature type="signal peptide">
    <location>
        <begin position="1"/>
        <end position="20"/>
    </location>
</feature>
<feature type="chain" id="PRO_0000015192" description="Ig kappa chain V-V region T1">
    <location>
        <begin position="21"/>
        <end position="128"/>
    </location>
</feature>
<feature type="region of interest" description="Framework-1">
    <location>
        <begin position="21"/>
        <end position="43"/>
    </location>
</feature>
<feature type="region of interest" description="Complementarity-determining-1">
    <location>
        <begin position="44"/>
        <end position="54"/>
    </location>
</feature>
<feature type="region of interest" description="Framework-2">
    <location>
        <begin position="55"/>
        <end position="69"/>
    </location>
</feature>
<feature type="region of interest" description="Complementarity-determining-2">
    <location>
        <begin position="70"/>
        <end position="76"/>
    </location>
</feature>
<feature type="region of interest" description="Framework-3">
    <location>
        <begin position="77"/>
        <end position="108"/>
    </location>
</feature>
<feature type="region of interest" description="Complementarity-determining-3">
    <location>
        <begin position="109"/>
        <end position="117"/>
    </location>
</feature>
<feature type="region of interest" description="Framework-4">
    <location>
        <begin position="118"/>
        <end position="127"/>
    </location>
</feature>
<feature type="disulfide bond" evidence="1">
    <location>
        <begin position="43"/>
        <end position="108"/>
    </location>
</feature>
<feature type="non-terminal residue">
    <location>
        <position position="128"/>
    </location>
</feature>
<keyword id="KW-1064">Adaptive immunity</keyword>
<keyword id="KW-1015">Disulfide bond</keyword>
<keyword id="KW-0391">Immunity</keyword>
<keyword id="KW-1280">Immunoglobulin</keyword>
<keyword id="KW-1185">Reference proteome</keyword>
<keyword id="KW-0732">Signal</keyword>
<protein>
    <recommendedName>
        <fullName>Ig kappa chain V-V region T1</fullName>
    </recommendedName>
</protein>
<name>KV5A5_MOUSE</name>
<reference key="1">
    <citation type="journal article" date="1980" name="Nature">
        <title>Functional and non-functional joining in immunoglobulin light chain genes of a mouse myeloma.</title>
        <authorList>
            <person name="Altenburger W."/>
            <person name="Steinmetz M."/>
            <person name="Zachau H.G."/>
        </authorList>
    </citation>
    <scope>NUCLEOTIDE SEQUENCE [GENOMIC DNA]</scope>
</reference>
<accession>P01637</accession>
<evidence type="ECO:0000255" key="1">
    <source>
        <dbReference type="PROSITE-ProRule" id="PRU00114"/>
    </source>
</evidence>
<dbReference type="EMBL" id="V00772">
    <property type="protein sequence ID" value="CAA24150.1"/>
    <property type="molecule type" value="Genomic_DNA"/>
</dbReference>
<dbReference type="PIR" id="A01920">
    <property type="entry name" value="KVMST1"/>
</dbReference>
<dbReference type="SMR" id="P01637"/>
<dbReference type="FunCoup" id="P01637">
    <property type="interactions" value="783"/>
</dbReference>
<dbReference type="MINT" id="P01637"/>
<dbReference type="PeptideAtlas" id="P01637"/>
<dbReference type="InParanoid" id="P01637"/>
<dbReference type="Proteomes" id="UP000000589">
    <property type="component" value="Unplaced"/>
</dbReference>
<dbReference type="RNAct" id="P01637">
    <property type="molecule type" value="protein"/>
</dbReference>
<dbReference type="GO" id="GO:0019814">
    <property type="term" value="C:immunoglobulin complex"/>
    <property type="evidence" value="ECO:0000318"/>
    <property type="project" value="GO_Central"/>
</dbReference>
<dbReference type="GO" id="GO:0002250">
    <property type="term" value="P:adaptive immune response"/>
    <property type="evidence" value="ECO:0007669"/>
    <property type="project" value="UniProtKB-KW"/>
</dbReference>
<dbReference type="GO" id="GO:0006955">
    <property type="term" value="P:immune response"/>
    <property type="evidence" value="ECO:0000318"/>
    <property type="project" value="GO_Central"/>
</dbReference>
<dbReference type="CDD" id="cd04980">
    <property type="entry name" value="IgV_L_kappa"/>
    <property type="match status" value="1"/>
</dbReference>
<dbReference type="FunFam" id="2.60.40.10:FF:000212">
    <property type="entry name" value="Immunoglobulin kappa chain variable 12-38"/>
    <property type="match status" value="1"/>
</dbReference>
<dbReference type="Gene3D" id="2.60.40.10">
    <property type="entry name" value="Immunoglobulins"/>
    <property type="match status" value="1"/>
</dbReference>
<dbReference type="InterPro" id="IPR007110">
    <property type="entry name" value="Ig-like_dom"/>
</dbReference>
<dbReference type="InterPro" id="IPR036179">
    <property type="entry name" value="Ig-like_dom_sf"/>
</dbReference>
<dbReference type="InterPro" id="IPR013783">
    <property type="entry name" value="Ig-like_fold"/>
</dbReference>
<dbReference type="InterPro" id="IPR003599">
    <property type="entry name" value="Ig_sub"/>
</dbReference>
<dbReference type="InterPro" id="IPR013106">
    <property type="entry name" value="Ig_V-set"/>
</dbReference>
<dbReference type="InterPro" id="IPR050150">
    <property type="entry name" value="IgV_Light_Chain"/>
</dbReference>
<dbReference type="PANTHER" id="PTHR23267">
    <property type="entry name" value="IMMUNOGLOBULIN LIGHT CHAIN"/>
    <property type="match status" value="1"/>
</dbReference>
<dbReference type="Pfam" id="PF07686">
    <property type="entry name" value="V-set"/>
    <property type="match status" value="1"/>
</dbReference>
<dbReference type="SMART" id="SM00409">
    <property type="entry name" value="IG"/>
    <property type="match status" value="1"/>
</dbReference>
<dbReference type="SMART" id="SM00406">
    <property type="entry name" value="IGv"/>
    <property type="match status" value="1"/>
</dbReference>
<dbReference type="SUPFAM" id="SSF48726">
    <property type="entry name" value="Immunoglobulin"/>
    <property type="match status" value="1"/>
</dbReference>
<dbReference type="PROSITE" id="PS50835">
    <property type="entry name" value="IG_LIKE"/>
    <property type="match status" value="1"/>
</dbReference>
<sequence>MRTPAQFLGILLLWFPGIKCDIKMTQSPSSMYASLGERVTISCKASQDINSYLTWFQQKPGKSPKTLLYRANRLVDGVPSRFSGSGSGQDFSLTISSLEYEDMGIYYCLQYDEFPLTFGAGTKLELKR</sequence>
<proteinExistence type="predicted"/>